<accession>Q8ST44</accession>
<proteinExistence type="inferred from homology"/>
<dbReference type="EMBL" id="AL590447">
    <property type="protein sequence ID" value="CAD25716.1"/>
    <property type="molecule type" value="Genomic_DNA"/>
</dbReference>
<dbReference type="EMBL" id="AL590449">
    <property type="protein sequence ID" value="CAD25725.1"/>
    <property type="molecule type" value="Genomic_DNA"/>
</dbReference>
<dbReference type="RefSeq" id="NP_586112.1">
    <property type="nucleotide sequence ID" value="NM_001041734.1"/>
</dbReference>
<dbReference type="RefSeq" id="NP_586121.1">
    <property type="nucleotide sequence ID" value="NM_001041954.1"/>
</dbReference>
<dbReference type="SMR" id="Q8ST44"/>
<dbReference type="STRING" id="284813.Q8ST44"/>
<dbReference type="GeneID" id="859546"/>
<dbReference type="GeneID" id="859767"/>
<dbReference type="KEGG" id="ecu:ECU07_1850"/>
<dbReference type="KEGG" id="ecu:ECU10_0050"/>
<dbReference type="VEuPathDB" id="MicrosporidiaDB:ECU07_1850"/>
<dbReference type="VEuPathDB" id="MicrosporidiaDB:ECU10_0050"/>
<dbReference type="HOGENOM" id="CLU_035434_0_0_1"/>
<dbReference type="InParanoid" id="Q8ST44"/>
<dbReference type="Proteomes" id="UP000000819">
    <property type="component" value="Chromosome VII"/>
</dbReference>
<dbReference type="Proteomes" id="UP000000819">
    <property type="component" value="Chromosome X"/>
</dbReference>
<dbReference type="InterPro" id="IPR022115">
    <property type="entry name" value="DUF3654"/>
</dbReference>
<dbReference type="InterPro" id="IPR011667">
    <property type="entry name" value="UPF0329"/>
</dbReference>
<dbReference type="Pfam" id="PF07753">
    <property type="entry name" value="DUF1609"/>
    <property type="match status" value="1"/>
</dbReference>
<dbReference type="Pfam" id="PF12376">
    <property type="entry name" value="DUF3654"/>
    <property type="match status" value="1"/>
</dbReference>
<gene>
    <name type="ordered locus">ECU07_1850</name>
</gene>
<gene>
    <name type="ordered locus">ECU10_0050</name>
</gene>
<keyword id="KW-1185">Reference proteome</keyword>
<name>Y7I5_ENCCU</name>
<reference key="1">
    <citation type="journal article" date="2001" name="Nature">
        <title>Genome sequence and gene compaction of the eukaryote parasite Encephalitozoon cuniculi.</title>
        <authorList>
            <person name="Katinka M.D."/>
            <person name="Duprat S."/>
            <person name="Cornillot E."/>
            <person name="Metenier G."/>
            <person name="Thomarat F."/>
            <person name="Prensier G."/>
            <person name="Barbe V."/>
            <person name="Peyretaillade E."/>
            <person name="Brottier P."/>
            <person name="Wincker P."/>
            <person name="Delbac F."/>
            <person name="El Alaoui H."/>
            <person name="Peyret P."/>
            <person name="Saurin W."/>
            <person name="Gouy M."/>
            <person name="Weissenbach J."/>
            <person name="Vivares C.P."/>
        </authorList>
    </citation>
    <scope>NUCLEOTIDE SEQUENCE [LARGE SCALE GENOMIC DNA]</scope>
    <source>
        <strain>GB-M1</strain>
    </source>
</reference>
<protein>
    <recommendedName>
        <fullName>UPF0329 protein ECU07_1850/ECU10_0050</fullName>
    </recommendedName>
</protein>
<feature type="chain" id="PRO_0000223171" description="UPF0329 protein ECU07_1850/ECU10_0050">
    <location>
        <begin position="1"/>
        <end position="634"/>
    </location>
</feature>
<feature type="region of interest" description="Disordered" evidence="1">
    <location>
        <begin position="354"/>
        <end position="438"/>
    </location>
</feature>
<feature type="compositionally biased region" description="Basic and acidic residues" evidence="1">
    <location>
        <begin position="354"/>
        <end position="365"/>
    </location>
</feature>
<feature type="compositionally biased region" description="Basic and acidic residues" evidence="1">
    <location>
        <begin position="397"/>
        <end position="407"/>
    </location>
</feature>
<feature type="compositionally biased region" description="Acidic residues" evidence="1">
    <location>
        <begin position="408"/>
        <end position="417"/>
    </location>
</feature>
<sequence>MMRTWMVYVVGLVGELYGSQVEETREMREMKEALERLFSRRLSDSEIEMVESLEDGGNFETRVLVPVIFHKDKVVVSPAARYRDIEKEERVYVEEVIRRLRSLVWHSMVYIYVPKNNDWIMDLICEVLEMSSPQRLDDVALYKDTGGKCGMKFVDLVNKMFKQNADMLIKFGDLLSNGAETRILELPDSLREDERRREVEMLQRVKEYGKMLCTEDKQKEIVEAQKIMCDACEQIWRREEDRKEFTMEIYSRYLNMKVMRGGVERDVEDPLIDHMDHYMLISTHKKYKCMDVVAELVRKVFVEDKDIEDSDVMSAVCSVRERKRLEEMREMEERKRKEEERAKNEEELLRMVEREEREKREESKGRGKKKRGNRGAGESKEESKGRGKRKRGNKGAGESKEEDRGEEGGVEAEDPLEEMAVGEAWRKKKGSGEKRISEEHHYKVHSRVLRWKKDAGEIKRELDEGYEKKWKNRSIEEIKEQKKVHDIVEVMKLLRDKEKCDRFFVRTGKYMKGKSERWKMVANGILEEGGEKKVGKVEVGLFKGEGGESVVYHLMFRPTETERTGRVGGSSFGKYDDVDEIKKEKSSDMFGFRYPSGVRCEMTSNRNEFRIEYRNRKNTSEVLRTLTILRIPET</sequence>
<comment type="similarity">
    <text evidence="2">Belongs to the UPF0329 family.</text>
</comment>
<organism>
    <name type="scientific">Encephalitozoon cuniculi (strain GB-M1)</name>
    <name type="common">Microsporidian parasite</name>
    <dbReference type="NCBI Taxonomy" id="284813"/>
    <lineage>
        <taxon>Eukaryota</taxon>
        <taxon>Fungi</taxon>
        <taxon>Fungi incertae sedis</taxon>
        <taxon>Microsporidia</taxon>
        <taxon>Unikaryonidae</taxon>
        <taxon>Encephalitozoon</taxon>
    </lineage>
</organism>
<evidence type="ECO:0000256" key="1">
    <source>
        <dbReference type="SAM" id="MobiDB-lite"/>
    </source>
</evidence>
<evidence type="ECO:0000305" key="2"/>